<feature type="chain" id="PRO_0000272494" description="Phosphate import ATP-binding protein PstB">
    <location>
        <begin position="1"/>
        <end position="267"/>
    </location>
</feature>
<feature type="domain" description="ABC transporter" evidence="1">
    <location>
        <begin position="12"/>
        <end position="251"/>
    </location>
</feature>
<feature type="binding site" evidence="1">
    <location>
        <begin position="44"/>
        <end position="51"/>
    </location>
    <ligand>
        <name>ATP</name>
        <dbReference type="ChEBI" id="CHEBI:30616"/>
    </ligand>
</feature>
<dbReference type="EC" id="7.3.2.1" evidence="1"/>
<dbReference type="EMBL" id="CP000095">
    <property type="protein sequence ID" value="AAZ57801.1"/>
    <property type="molecule type" value="Genomic_DNA"/>
</dbReference>
<dbReference type="RefSeq" id="WP_011293843.1">
    <property type="nucleotide sequence ID" value="NC_007335.2"/>
</dbReference>
<dbReference type="SMR" id="Q46L27"/>
<dbReference type="STRING" id="59920.PMN2A_0309"/>
<dbReference type="KEGG" id="pmn:PMN2A_0309"/>
<dbReference type="HOGENOM" id="CLU_000604_1_22_3"/>
<dbReference type="OrthoDB" id="9802185at2"/>
<dbReference type="PhylomeDB" id="Q46L27"/>
<dbReference type="Proteomes" id="UP000002535">
    <property type="component" value="Chromosome"/>
</dbReference>
<dbReference type="GO" id="GO:0005886">
    <property type="term" value="C:plasma membrane"/>
    <property type="evidence" value="ECO:0007669"/>
    <property type="project" value="UniProtKB-SubCell"/>
</dbReference>
<dbReference type="GO" id="GO:0005524">
    <property type="term" value="F:ATP binding"/>
    <property type="evidence" value="ECO:0007669"/>
    <property type="project" value="UniProtKB-KW"/>
</dbReference>
<dbReference type="GO" id="GO:0016887">
    <property type="term" value="F:ATP hydrolysis activity"/>
    <property type="evidence" value="ECO:0007669"/>
    <property type="project" value="InterPro"/>
</dbReference>
<dbReference type="GO" id="GO:0015415">
    <property type="term" value="F:ATPase-coupled phosphate ion transmembrane transporter activity"/>
    <property type="evidence" value="ECO:0007669"/>
    <property type="project" value="UniProtKB-EC"/>
</dbReference>
<dbReference type="GO" id="GO:0035435">
    <property type="term" value="P:phosphate ion transmembrane transport"/>
    <property type="evidence" value="ECO:0007669"/>
    <property type="project" value="InterPro"/>
</dbReference>
<dbReference type="CDD" id="cd03260">
    <property type="entry name" value="ABC_PstB_phosphate_transporter"/>
    <property type="match status" value="1"/>
</dbReference>
<dbReference type="Gene3D" id="3.40.50.300">
    <property type="entry name" value="P-loop containing nucleotide triphosphate hydrolases"/>
    <property type="match status" value="1"/>
</dbReference>
<dbReference type="InterPro" id="IPR003593">
    <property type="entry name" value="AAA+_ATPase"/>
</dbReference>
<dbReference type="InterPro" id="IPR003439">
    <property type="entry name" value="ABC_transporter-like_ATP-bd"/>
</dbReference>
<dbReference type="InterPro" id="IPR017871">
    <property type="entry name" value="ABC_transporter-like_CS"/>
</dbReference>
<dbReference type="InterPro" id="IPR027417">
    <property type="entry name" value="P-loop_NTPase"/>
</dbReference>
<dbReference type="InterPro" id="IPR005670">
    <property type="entry name" value="PstB-like"/>
</dbReference>
<dbReference type="NCBIfam" id="TIGR00972">
    <property type="entry name" value="3a0107s01c2"/>
    <property type="match status" value="1"/>
</dbReference>
<dbReference type="PANTHER" id="PTHR43423">
    <property type="entry name" value="ABC TRANSPORTER I FAMILY MEMBER 17"/>
    <property type="match status" value="1"/>
</dbReference>
<dbReference type="PANTHER" id="PTHR43423:SF1">
    <property type="entry name" value="ABC TRANSPORTER I FAMILY MEMBER 17"/>
    <property type="match status" value="1"/>
</dbReference>
<dbReference type="Pfam" id="PF00005">
    <property type="entry name" value="ABC_tran"/>
    <property type="match status" value="1"/>
</dbReference>
<dbReference type="SMART" id="SM00382">
    <property type="entry name" value="AAA"/>
    <property type="match status" value="1"/>
</dbReference>
<dbReference type="SUPFAM" id="SSF52540">
    <property type="entry name" value="P-loop containing nucleoside triphosphate hydrolases"/>
    <property type="match status" value="1"/>
</dbReference>
<dbReference type="PROSITE" id="PS00211">
    <property type="entry name" value="ABC_TRANSPORTER_1"/>
    <property type="match status" value="1"/>
</dbReference>
<dbReference type="PROSITE" id="PS50893">
    <property type="entry name" value="ABC_TRANSPORTER_2"/>
    <property type="match status" value="1"/>
</dbReference>
<dbReference type="PROSITE" id="PS51238">
    <property type="entry name" value="PSTB"/>
    <property type="match status" value="1"/>
</dbReference>
<comment type="function">
    <text evidence="1">Part of the ABC transporter complex PstSACB involved in phosphate import. Responsible for energy coupling to the transport system.</text>
</comment>
<comment type="catalytic activity">
    <reaction evidence="1">
        <text>phosphate(out) + ATP + H2O = ADP + 2 phosphate(in) + H(+)</text>
        <dbReference type="Rhea" id="RHEA:24440"/>
        <dbReference type="ChEBI" id="CHEBI:15377"/>
        <dbReference type="ChEBI" id="CHEBI:15378"/>
        <dbReference type="ChEBI" id="CHEBI:30616"/>
        <dbReference type="ChEBI" id="CHEBI:43474"/>
        <dbReference type="ChEBI" id="CHEBI:456216"/>
        <dbReference type="EC" id="7.3.2.1"/>
    </reaction>
</comment>
<comment type="subunit">
    <text evidence="1">The complex is composed of two ATP-binding proteins (PstB), two transmembrane proteins (PstC and PstA) and a solute-binding protein (PstS).</text>
</comment>
<comment type="subcellular location">
    <subcellularLocation>
        <location evidence="1">Cell inner membrane</location>
        <topology evidence="1">Peripheral membrane protein</topology>
    </subcellularLocation>
</comment>
<comment type="similarity">
    <text evidence="1">Belongs to the ABC transporter superfamily. Phosphate importer (TC 3.A.1.7) family.</text>
</comment>
<reference key="1">
    <citation type="journal article" date="2007" name="PLoS Genet.">
        <title>Patterns and implications of gene gain and loss in the evolution of Prochlorococcus.</title>
        <authorList>
            <person name="Kettler G.C."/>
            <person name="Martiny A.C."/>
            <person name="Huang K."/>
            <person name="Zucker J."/>
            <person name="Coleman M.L."/>
            <person name="Rodrigue S."/>
            <person name="Chen F."/>
            <person name="Lapidus A."/>
            <person name="Ferriera S."/>
            <person name="Johnson J."/>
            <person name="Steglich C."/>
            <person name="Church G.M."/>
            <person name="Richardson P."/>
            <person name="Chisholm S.W."/>
        </authorList>
    </citation>
    <scope>NUCLEOTIDE SEQUENCE [LARGE SCALE GENOMIC DNA]</scope>
    <source>
        <strain>NATL2A</strain>
    </source>
</reference>
<sequence length="267" mass="29804">MNKKNIKTTSSVSLDNVSIRYGNSVAVKNVFCDIEKNQVTSFIGPSGCGKSTVIRAINRMNDLIEGCKLSGSVIFEGIDIYAEDIDPVEVRRRIGMVFQQPNPFPKSIYENIAFGARVNGYKGNMDQLVEESLTKAAVWDECKDKLNESGYSLSGGQQQRLCIARTIAIEPDVILMDEPCSALDPLSTLKIEETIHELKKNFTIIIVTHNMQQANRVSDYTAFFNTEKKDKDLGGKIGFLVEFDKTKNMFNSPKQKSTQDYISGKFG</sequence>
<organism>
    <name type="scientific">Prochlorococcus marinus (strain NATL2A)</name>
    <dbReference type="NCBI Taxonomy" id="59920"/>
    <lineage>
        <taxon>Bacteria</taxon>
        <taxon>Bacillati</taxon>
        <taxon>Cyanobacteriota</taxon>
        <taxon>Cyanophyceae</taxon>
        <taxon>Synechococcales</taxon>
        <taxon>Prochlorococcaceae</taxon>
        <taxon>Prochlorococcus</taxon>
    </lineage>
</organism>
<protein>
    <recommendedName>
        <fullName evidence="1">Phosphate import ATP-binding protein PstB</fullName>
        <ecNumber evidence="1">7.3.2.1</ecNumber>
    </recommendedName>
    <alternativeName>
        <fullName evidence="1">ABC phosphate transporter</fullName>
    </alternativeName>
    <alternativeName>
        <fullName evidence="1">Phosphate-transporting ATPase</fullName>
    </alternativeName>
</protein>
<accession>Q46L27</accession>
<name>PSTB_PROMT</name>
<proteinExistence type="inferred from homology"/>
<evidence type="ECO:0000255" key="1">
    <source>
        <dbReference type="HAMAP-Rule" id="MF_01702"/>
    </source>
</evidence>
<keyword id="KW-0067">ATP-binding</keyword>
<keyword id="KW-0997">Cell inner membrane</keyword>
<keyword id="KW-1003">Cell membrane</keyword>
<keyword id="KW-0472">Membrane</keyword>
<keyword id="KW-0547">Nucleotide-binding</keyword>
<keyword id="KW-0592">Phosphate transport</keyword>
<keyword id="KW-1185">Reference proteome</keyword>
<keyword id="KW-1278">Translocase</keyword>
<keyword id="KW-0813">Transport</keyword>
<gene>
    <name evidence="1" type="primary">pstB</name>
    <name type="ordered locus">PMN2A_0309</name>
</gene>